<dbReference type="EMBL" id="AY054746">
    <property type="protein sequence ID" value="AAL14349.1"/>
    <property type="molecule type" value="mRNA"/>
</dbReference>
<dbReference type="PIR" id="S29216">
    <property type="entry name" value="S29216"/>
</dbReference>
<dbReference type="SMR" id="P29425"/>
<dbReference type="ArachnoServer" id="AS000243">
    <property type="toxin name" value="delta-ctenitoxin-Pn2a"/>
</dbReference>
<dbReference type="GO" id="GO:0005576">
    <property type="term" value="C:extracellular region"/>
    <property type="evidence" value="ECO:0007669"/>
    <property type="project" value="UniProtKB-SubCell"/>
</dbReference>
<dbReference type="GO" id="GO:0017080">
    <property type="term" value="F:sodium channel regulator activity"/>
    <property type="evidence" value="ECO:0007669"/>
    <property type="project" value="UniProtKB-KW"/>
</dbReference>
<dbReference type="GO" id="GO:0090729">
    <property type="term" value="F:toxin activity"/>
    <property type="evidence" value="ECO:0007669"/>
    <property type="project" value="UniProtKB-KW"/>
</dbReference>
<dbReference type="InterPro" id="IPR035285">
    <property type="entry name" value="CNTX"/>
</dbReference>
<dbReference type="Pfam" id="PF17492">
    <property type="entry name" value="D_CNTX"/>
    <property type="match status" value="1"/>
</dbReference>
<proteinExistence type="evidence at protein level"/>
<comment type="function">
    <text evidence="2 3 4 5 6 7 8 9 19">Toxin that is known to potentiate erectile function (PubMed:18397797). It binds voltage-dependently to sodium channels (Nav), inhibits the inactivation of the activated channels and decreases the peak inward current (PubMed:19231838, PubMed:26119670). The toxin delays inactivation of Nav1.2/SCN2A, Nav1.3/SCN3A, Nav1.4/SCN4A and Nav1.8/SCN10A, slows the inactivation process and decreases the sodium peak amplitude of Nav1.5/SCN5A and Nav1.6/SCN8A (PubMed:26119670). In vivo, it enhances erectile function by inducing the release of nictric oxide (NO): it slows the sodium current, leading to depolarization, which leads to an increase in calcium influx (probably via activation of N-type calcium channels) which in turn activates neuronal NO synthase (nNOS/NOS1), inducing nitric oxide (NO) production (PubMed:20722794, PubMed:21975567). In a final step, NO activates soluble guanylate cyclase (GUCY1A1/GUCY1B1) which in turn increases cGMP formation, resulting in penile erection (PubMed:23583324). It is noteworthy that the toxin does not provoke erection by inhibiting phosphodiesterase type 5 (PDE5A), an enzyme that hydrolysis cGMP (PubMed:23583324). In vivo, it also causes scratching, lacrimation, hypersalivation, sweating and agitation followed by spastic paralysis of the anterior and posterior extremities and death at dose levels of 0.79 mg/mouse (PubMed:1397265, PubMed:16278100). It is insecticidal to the larval and adult forms of the house fly (PubMed:1397265). The toxin also improves cavernosal relaxation in different models where erectile dysfunction is observed, such as deoxycorticosterone-acetate (DOCA)-salt hypertensive rats, mice models for type-1 diabetes, as well as elderly rats (PubMed:18397797, PubMed:21975567, PubMed:22925420).</text>
</comment>
<comment type="subcellular location">
    <subcellularLocation>
        <location evidence="2">Secreted</location>
    </subcellularLocation>
</comment>
<comment type="tissue specificity">
    <text evidence="18">Expressed by the venom gland.</text>
</comment>
<comment type="domain">
    <text evidence="17">The presence of a 'disulfide through disulfide knot' structurally defines this protein as a knottin.</text>
</comment>
<comment type="mass spectrometry"/>
<comment type="mass spectrometry"/>
<comment type="mass spectrometry"/>
<comment type="pharmaceutical">
    <text evidence="9">PnPP-19, a 19 AA-peptide that is N-terminally acetylated and C-terminally amidated, has been suggested to be a promising drug candidate for the treatment of erectile dysfunction (PubMed:26119670). The peptide potentiates erection through an increase in nitric oxide (NO)/cGMP production (PubMed:26119670). It has no apparent toxicity (when tested on brain, heart, lung, liver and kidney) and low immunogenicity in mice (PubMed:26119670). It acts by a different mechanism than the native toxin, since it does not affect sodium channels, has no effect on the rat heart, and is independent of extracellular calcium influx through N-type calcium channels (PubMed:26119670). In addition, it has a long half-life since its potentiating effect is observed 15 minutes after injection and lasts about one hour (PubMed:26119670).</text>
</comment>
<comment type="pharmaceutical">
    <text evidence="10 11 12">PnPP-19, a 19 AA-peptide that is N-terminally acetylated and C-terminally amidated, has been suggested to be a promising drug candidate for the treatment of pain (PubMed:29342943). The peptide induces both peripheral and central antinociception (PubMed:28031732, PubMed:28087360). This antinociceptive effect involves the activation of opioid and cannabinoid receptors along with the activation of the NO/cGMP/KATP pathway (PubMed:28031732, PubMed:28087360, PubMed:29342943).</text>
</comment>
<comment type="similarity">
    <text evidence="17">Belongs to the neurotoxin 03 (Tx2) family. 06 subfamily.</text>
</comment>
<keyword id="KW-0903">Direct protein sequencing</keyword>
<keyword id="KW-1015">Disulfide bond</keyword>
<keyword id="KW-0872">Ion channel impairing toxin</keyword>
<keyword id="KW-0960">Knottin</keyword>
<keyword id="KW-0528">Neurotoxin</keyword>
<keyword id="KW-0582">Pharmaceutical</keyword>
<keyword id="KW-0964">Secreted</keyword>
<keyword id="KW-0732">Signal</keyword>
<keyword id="KW-0800">Toxin</keyword>
<keyword id="KW-0738">Voltage-gated sodium channel impairing toxin</keyword>
<accession>P29425</accession>
<accession>Q95UF2</accession>
<name>TX36A_PHONI</name>
<feature type="signal peptide" evidence="1">
    <location>
        <begin position="1"/>
        <end position="17"/>
    </location>
</feature>
<feature type="propeptide" id="PRO_0000035498" evidence="2 3 5">
    <location>
        <begin position="18"/>
        <end position="34"/>
    </location>
</feature>
<feature type="chain" id="PRO_0000035499" description="Delta-ctenitoxin-Pn2a" evidence="2">
    <location>
        <begin position="35"/>
        <end position="82"/>
    </location>
</feature>
<feature type="disulfide bond" evidence="17">
    <location>
        <begin position="37"/>
        <end position="51"/>
    </location>
</feature>
<feature type="disulfide bond" evidence="17">
    <location>
        <begin position="44"/>
        <end position="57"/>
    </location>
</feature>
<feature type="disulfide bond" evidence="17">
    <location>
        <begin position="48"/>
        <end position="80"/>
    </location>
</feature>
<feature type="disulfide bond" evidence="17">
    <location>
        <begin position="50"/>
        <end position="65"/>
    </location>
</feature>
<feature type="disulfide bond" evidence="17">
    <location>
        <begin position="59"/>
        <end position="63"/>
    </location>
</feature>
<feature type="mutagenesis site" description="In PnPP-19 (acetylated and amidated); loss of activity on sodium channels; when associated with 1-M--C-63 DEL; 64-G--Q-68 and S-80." evidence="9">
    <location>
        <begin position="1"/>
        <end position="63"/>
    </location>
</feature>
<feature type="mutagenesis site" description="In PnPP-19 (acetylated and amidated); loss of activity on sodium channels; when associated with 1-M--C-63 DEL; 64-G--Q-68 and S-80." evidence="9">
    <original>ICRQG</original>
    <variation>GERRQ</variation>
    <location>
        <begin position="64"/>
        <end position="68"/>
    </location>
</feature>
<feature type="mutagenesis site" description="In PnPP-19 (acetylated and amidated); loss of activity on sodium channels; when associated with 1-M--C-63 DEL; 64-G--Q-68 and S-80." evidence="9">
    <original>C</original>
    <variation>S</variation>
    <location>
        <position position="80"/>
    </location>
</feature>
<reference key="1">
    <citation type="journal article" date="2002" name="FEBS Lett.">
        <title>Electrophysiological characterization and molecular identification of the Phoneutria nigriventer peptide toxin PnTx2-6.</title>
        <authorList>
            <person name="Matavel A."/>
            <person name="Cruz J.S."/>
            <person name="Penaforte C.L."/>
            <person name="Araujo D.A.M."/>
            <person name="Kalapothakis E."/>
            <person name="Prado V.F."/>
            <person name="Diniz C.R."/>
            <person name="Cordeiro M.N."/>
            <person name="Beirao P.S.L."/>
        </authorList>
    </citation>
    <scope>NUCLEOTIDE SEQUENCE [MRNA]</scope>
    <source>
        <tissue>Venom gland</tissue>
    </source>
</reference>
<reference key="2">
    <citation type="journal article" date="1992" name="FEBS Lett.">
        <title>The purification and amino acid sequences of four Tx2 neurotoxins from the venom of the Brazilian 'armed' spider Phoneutria nigriventer (Keys).</title>
        <authorList>
            <person name="Cordeiro M.N."/>
            <person name="Diniz C.R."/>
            <person name="Valentim A.D.C."/>
            <person name="von Eickstedt V.R.D."/>
            <person name="Gilroy J."/>
            <person name="Richardson M."/>
        </authorList>
    </citation>
    <scope>PROTEIN SEQUENCE OF 35-82</scope>
    <scope>FUNCTION</scope>
    <scope>SUBCELLULAR LOCATION</scope>
    <scope>BIOASSAY</scope>
    <scope>MASS SPECTROMETRY</scope>
    <source>
        <tissue>Venom</tissue>
    </source>
</reference>
<reference key="3">
    <citation type="journal article" date="2006" name="Comp. Biochem. Physiol.">
        <title>Comparison of the partial proteomes of the venoms of Brazilian spiders of the genus Phoneutria.</title>
        <authorList>
            <person name="Richardson M."/>
            <person name="Pimenta A.M."/>
            <person name="Bemquerer M.P."/>
            <person name="Santoro M.M."/>
            <person name="Beirao P.S."/>
            <person name="Lima M.E."/>
            <person name="Figueiredo S.G."/>
            <person name="Bloch C. Jr."/>
            <person name="Vasconcelos E.A."/>
            <person name="Campos F.A."/>
            <person name="Gomes P.C."/>
            <person name="Cordeiro M.N."/>
        </authorList>
    </citation>
    <scope>PROTEIN SEQUENCE OF 35-82</scope>
    <scope>SUBCELLULAR LOCATION</scope>
    <scope>MASS SPECTROMETRY</scope>
    <scope>BIOASSAY</scope>
    <source>
        <tissue>Venom</tissue>
    </source>
</reference>
<reference key="4">
    <citation type="journal article" date="2009" name="Biochemistry">
        <title>Structure and activity analysis of two spider toxins that alter sodium channel inactivation kinetics.</title>
        <authorList>
            <person name="Matavel A."/>
            <person name="Fleury C."/>
            <person name="Oliveira L.C."/>
            <person name="Molina F."/>
            <person name="de Lima M.E."/>
            <person name="Cruz J.S."/>
            <person name="Cordeiro M.N."/>
            <person name="Richardson M."/>
            <person name="Ramos C.H."/>
            <person name="Beirao P.S."/>
        </authorList>
    </citation>
    <scope>PROTEIN SEQUENCE OF 35-82</scope>
    <scope>FUNCTION</scope>
    <scope>SUBCELLULAR LOCATION</scope>
    <scope>MASS SPECTROMETRY</scope>
    <source>
        <tissue>Venom</tissue>
    </source>
</reference>
<reference key="5">
    <citation type="journal article" date="2008" name="Toxicon">
        <title>Tx2-6 toxin of the Phoneutria nigriventer spider potentiates rat erectile function.</title>
        <authorList>
            <person name="Nunes K.P."/>
            <person name="Costa-Goncalves A."/>
            <person name="Lanza L.F."/>
            <person name="Cortes S.F."/>
            <person name="Cordeiro M.N."/>
            <person name="Richardson M."/>
            <person name="Pimenta A.M."/>
            <person name="Webb R.C."/>
            <person name="Leite R."/>
            <person name="De Lima M.E."/>
        </authorList>
    </citation>
    <scope>FUNCTION</scope>
</reference>
<reference key="6">
    <citation type="journal article" date="2010" name="J. Sex. Med.">
        <title>Nitric oxide-induced vasorelaxation in response to PnTx2-6 toxin from Phoneutria nigriventer spider in rat cavernosal tissue.</title>
        <authorList>
            <person name="Nunes K.P."/>
            <person name="Cordeiro M.N."/>
            <person name="Richardson M."/>
            <person name="Borges M.N."/>
            <person name="Diniz S.O."/>
            <person name="Cardoso V.N."/>
            <person name="Tostes R."/>
            <person name="De Lima M.E."/>
            <person name="Webb R.C."/>
            <person name="Leite R."/>
        </authorList>
    </citation>
    <scope>FUNCTION</scope>
</reference>
<reference key="7">
    <citation type="journal article" date="2012" name="J. Sex. Med.">
        <title>Erectile function is improved in aged rats by PnTx2-6, a toxin from Phoneutria nigriventer spider venom.</title>
        <authorList>
            <person name="Nunes K.P."/>
            <person name="Toque H.A."/>
            <person name="Borges M.H."/>
            <person name="Richardson M."/>
            <person name="Webb R.C."/>
            <person name="de Lima M.E."/>
        </authorList>
    </citation>
    <scope>FUNCTION</scope>
</reference>
<reference key="8">
    <citation type="journal article" date="2012" name="Int. J. Impot. Res.">
        <title>Increased cavernosal relaxation by Phoneutria nigriventer toxin, PnTx2-6, via activation at NO/cGMP signaling.</title>
        <authorList>
            <person name="Nunes K.P."/>
            <person name="Wynne B.M."/>
            <person name="Cordeiro M.N."/>
            <person name="Borges M.H."/>
            <person name="Richardson M."/>
            <person name="Leite R."/>
            <person name="DeLima M.E."/>
            <person name="Webb R.C."/>
        </authorList>
    </citation>
    <scope>FUNCTION</scope>
</reference>
<reference key="9">
    <citation type="journal article" date="2013" name="Toxicon">
        <title>New insights on arthropod toxins that potentiate erectile function.</title>
        <authorList>
            <person name="Nunes K.P."/>
            <person name="Torres F.S."/>
            <person name="Borges M.H."/>
            <person name="Matavel A."/>
            <person name="Pimenta A.M."/>
            <person name="De Lima M.E."/>
        </authorList>
    </citation>
    <scope>REVIEW (ERECTILE DYSFUNCTION)</scope>
</reference>
<reference key="10">
    <citation type="journal article" date="2015" name="J. Urol.">
        <title>PnPP-19, a synthetic and nontoxic peptide designed from a Phoneutria nigriventer toxin, potentiates erectile function via NO/cGMP.</title>
        <authorList>
            <person name="Silva C.N."/>
            <person name="Nunes K.P."/>
            <person name="Torres F.S."/>
            <person name="Cassoli J.S."/>
            <person name="Santos D.M."/>
            <person name="Almeida F.M."/>
            <person name="Matavel A."/>
            <person name="Cruz J.S."/>
            <person name="Santos-Miranda A."/>
            <person name="Nunes A.D."/>
            <person name="Castro C.H."/>
            <person name="Machado de Avila R.A."/>
            <person name="Chavez-Olortegui C."/>
            <person name="Lauar S.S."/>
            <person name="Felicori L."/>
            <person name="Resende J.M."/>
            <person name="Camargos E.R."/>
            <person name="Borges M.H."/>
            <person name="Cordeiro M.N."/>
            <person name="Peigneur S."/>
            <person name="Tytgat J."/>
            <person name="de Lima M.E."/>
        </authorList>
    </citation>
    <scope>FUNCTION AS ERECTILE POTENTIATOR</scope>
    <scope>PHARMACEUTICAL (ERECTILE DYSFUNCTION)</scope>
    <scope>MUTAGENESIS OF 1-MET--CYS-63; 64-ILE--GLY-68 AND CYS-80</scope>
</reference>
<reference key="11">
    <citation type="journal article" date="2016" name="J. Venom. Anim. Toxins Incl. Trop. Dis.">
        <title>A spider derived peptide, PnPP-19, induces central antinociception mediated by opioid and cannabinoid systems.</title>
        <authorList>
            <person name="da Fonseca Pacheco D."/>
            <person name="Freitas A.C."/>
            <person name="Pimenta A.M."/>
            <person name="Duarte I.D."/>
            <person name="de Lima M.E."/>
        </authorList>
    </citation>
    <scope>PHARMACEUTICAL (PAIN)</scope>
    <scope>MUTAGENESIS OF 1-MET--CYS-63; 64-ILE--GLY-68 AND CYS-80</scope>
</reference>
<reference key="12">
    <citation type="journal article" date="2017" name="Nitric Oxide">
        <title>The synthetic peptide PnPP-19 induces peripheral antinociception via activation of NO/cGMP/K(ATP) pathway: role of eNOS and nNOS.</title>
        <authorList>
            <person name="Freitas A.C."/>
            <person name="Silva G.C."/>
            <person name="Pacheco D.F."/>
            <person name="Pimenta A.M."/>
            <person name="Lemos V.S."/>
            <person name="Duarte I.D."/>
            <person name="de Lima M.E."/>
        </authorList>
    </citation>
    <scope>PHARMACEUTICAL (PAIN)</scope>
    <scope>MUTAGENESIS OF 1-MET--CYS-63; 64-ILE--GLY-68 AND CYS-80</scope>
</reference>
<reference key="13">
    <citation type="journal article" date="2018" name="Toxins">
        <title>The peptide PnPP-19, a spider toxin derivative, activates mu-opioid receptors and modulates calcium channels.</title>
        <authorList>
            <person name="Freitas A.C.N."/>
            <person name="Peigneur S."/>
            <person name="Macedo F.H.P."/>
            <person name="Menezes-Filho J.E."/>
            <person name="Millns P."/>
            <person name="Medeiros L.F."/>
            <person name="Arruda M.A."/>
            <person name="Cruz J."/>
            <person name="Holliday N.D."/>
            <person name="Tytgat J."/>
            <person name="Hathway G."/>
            <person name="de Lima M.E."/>
        </authorList>
    </citation>
    <scope>PHARMACEUTICAL (PAIN)</scope>
    <scope>MUTAGENESIS OF 1-MET--CYS-63; 64-ILE--GLY-68 AND CYS-80</scope>
</reference>
<protein>
    <recommendedName>
        <fullName evidence="17">Delta-ctenitoxin-Pn2a</fullName>
        <shortName evidence="17">Delta-CNTX-Pn2a</shortName>
    </recommendedName>
    <alternativeName>
        <fullName evidence="16">Delta-CNTX-Pn1c</fullName>
    </alternativeName>
    <alternativeName>
        <fullName evidence="13 14 15">Neurotoxin Tx2-6</fullName>
        <shortName evidence="15">PnTx2-6</shortName>
    </alternativeName>
</protein>
<evidence type="ECO:0000255" key="1"/>
<evidence type="ECO:0000269" key="2">
    <source>
    </source>
</evidence>
<evidence type="ECO:0000269" key="3">
    <source>
    </source>
</evidence>
<evidence type="ECO:0000269" key="4">
    <source>
    </source>
</evidence>
<evidence type="ECO:0000269" key="5">
    <source>
    </source>
</evidence>
<evidence type="ECO:0000269" key="6">
    <source>
    </source>
</evidence>
<evidence type="ECO:0000269" key="7">
    <source>
    </source>
</evidence>
<evidence type="ECO:0000269" key="8">
    <source>
    </source>
</evidence>
<evidence type="ECO:0000269" key="9">
    <source>
    </source>
</evidence>
<evidence type="ECO:0000269" key="10">
    <source>
    </source>
</evidence>
<evidence type="ECO:0000269" key="11">
    <source>
    </source>
</evidence>
<evidence type="ECO:0000269" key="12">
    <source>
    </source>
</evidence>
<evidence type="ECO:0000303" key="13">
    <source>
    </source>
</evidence>
<evidence type="ECO:0000303" key="14">
    <source>
    </source>
</evidence>
<evidence type="ECO:0000303" key="15">
    <source>
    </source>
</evidence>
<evidence type="ECO:0000303" key="16">
    <source>
    </source>
</evidence>
<evidence type="ECO:0000305" key="17"/>
<evidence type="ECO:0000305" key="18">
    <source>
    </source>
</evidence>
<evidence type="ECO:0000305" key="19">
    <source>
    </source>
</evidence>
<sequence>MKVAILFLSILVLAVASESIEESRDDFAVEELGRATCAGQDQPCKETCDCCGERGECVCGGPCICRQGYFWIAWYKLANCKK</sequence>
<organism>
    <name type="scientific">Phoneutria nigriventer</name>
    <name type="common">Brazilian armed spider</name>
    <name type="synonym">Ctenus nigriventer</name>
    <dbReference type="NCBI Taxonomy" id="6918"/>
    <lineage>
        <taxon>Eukaryota</taxon>
        <taxon>Metazoa</taxon>
        <taxon>Ecdysozoa</taxon>
        <taxon>Arthropoda</taxon>
        <taxon>Chelicerata</taxon>
        <taxon>Arachnida</taxon>
        <taxon>Araneae</taxon>
        <taxon>Araneomorphae</taxon>
        <taxon>Entelegynae</taxon>
        <taxon>Lycosoidea</taxon>
        <taxon>Ctenidae</taxon>
        <taxon>Phoneutria</taxon>
    </lineage>
</organism>